<protein>
    <recommendedName>
        <fullName evidence="3">UDP-glycosyltransferase 76H1</fullName>
        <ecNumber evidence="4">2.4.1.-</ecNumber>
    </recommendedName>
</protein>
<comment type="function">
    <text evidence="1">May glycosylate diterpenes or flavonols in leaves.</text>
</comment>
<comment type="similarity">
    <text evidence="4">Belongs to the UDP-glycosyltransferase family.</text>
</comment>
<name>U76H1_STERE</name>
<feature type="chain" id="PRO_0000434466" description="UDP-glycosyltransferase 76H1">
    <location>
        <begin position="1"/>
        <end position="424"/>
    </location>
</feature>
<feature type="binding site" evidence="2">
    <location>
        <position position="248"/>
    </location>
    <ligand>
        <name>UDP-alpha-D-glucose</name>
        <dbReference type="ChEBI" id="CHEBI:58885"/>
    </ligand>
</feature>
<feature type="binding site" evidence="2">
    <location>
        <begin position="306"/>
        <end position="307"/>
    </location>
    <ligand>
        <name>UDP-alpha-D-glucose</name>
        <dbReference type="ChEBI" id="CHEBI:58885"/>
    </ligand>
</feature>
<feature type="binding site" evidence="2">
    <location>
        <begin position="324"/>
        <end position="332"/>
    </location>
    <ligand>
        <name>UDP-alpha-D-glucose</name>
        <dbReference type="ChEBI" id="CHEBI:58885"/>
    </ligand>
</feature>
<feature type="binding site" evidence="2">
    <location>
        <begin position="346"/>
        <end position="349"/>
    </location>
    <ligand>
        <name>UDP-alpha-D-glucose</name>
        <dbReference type="ChEBI" id="CHEBI:58885"/>
    </ligand>
</feature>
<gene>
    <name evidence="3" type="primary">UGT76H1</name>
</gene>
<proteinExistence type="evidence at transcript level"/>
<keyword id="KW-0808">Transferase</keyword>
<organism>
    <name type="scientific">Stevia rebaudiana</name>
    <name type="common">Stevia</name>
    <name type="synonym">Eupatorium rebaudianum</name>
    <dbReference type="NCBI Taxonomy" id="55670"/>
    <lineage>
        <taxon>Eukaryota</taxon>
        <taxon>Viridiplantae</taxon>
        <taxon>Streptophyta</taxon>
        <taxon>Embryophyta</taxon>
        <taxon>Tracheophyta</taxon>
        <taxon>Spermatophyta</taxon>
        <taxon>Magnoliopsida</taxon>
        <taxon>eudicotyledons</taxon>
        <taxon>Gunneridae</taxon>
        <taxon>Pentapetalae</taxon>
        <taxon>asterids</taxon>
        <taxon>campanulids</taxon>
        <taxon>Asterales</taxon>
        <taxon>Asteraceae</taxon>
        <taxon>Asteroideae</taxon>
        <taxon>Heliantheae alliance</taxon>
        <taxon>Eupatorieae</taxon>
        <taxon>Stevia</taxon>
    </lineage>
</organism>
<sequence>MLQLATYLHSQGISITIAQYPNFNSPDSSNHPELTFLPLSSGNLSVADISGGFFKFIQTLNHNCKPHFREYLVQNMSSDDKESIVIIRDNLMFFAGEIAGELGLPSIILRGSNAVMLTASDIIPQLHQEGRFPPPDSLLQETIPELVPFRYKDLPFIGYPIHQTLEFSITMMTPKSPASAILINTLEFLEQSALTQIRDHYKVPVFTIGPLHKIVTTRSTSILEEDTSCINWLDKQSPKSVVYVSLGSLAKLDEKVASEMACGLAMSNHKFLWVVRPGMVHGFEWVEFLPDSLVGEMKARGLIVKWAPQTTVLAHNAVGGFWSHCGWNSTIECLAEGVPMMCQPFFADQLLNARYVSDVWKTGFEIVIEKGEIACAIKRVLVDEEGEEMRQRAMEIKEKVKIAINDGGSSYDSFKDLVAFISSL</sequence>
<reference key="1">
    <citation type="journal article" date="2005" name="Plant J.">
        <title>Functional genomics uncovers three glucosyltransferases involved in the synthesis of the major sweet glucosides of Stevia rebaudiana.</title>
        <authorList>
            <person name="Richman A."/>
            <person name="Swanson A."/>
            <person name="Humphrey T."/>
            <person name="Chapman R."/>
            <person name="McGarvey B."/>
            <person name="Pocs R."/>
            <person name="Brandle J."/>
        </authorList>
    </citation>
    <scope>NUCLEOTIDE SEQUENCE [MRNA]</scope>
    <source>
        <tissue>Leaf</tissue>
    </source>
</reference>
<dbReference type="EC" id="2.4.1.-" evidence="4"/>
<dbReference type="EMBL" id="AY345977">
    <property type="protein sequence ID" value="AAR06915.1"/>
    <property type="molecule type" value="mRNA"/>
</dbReference>
<dbReference type="SMR" id="Q6VAB1"/>
<dbReference type="CAZy" id="GT1">
    <property type="family name" value="Glycosyltransferase Family 1"/>
</dbReference>
<dbReference type="GO" id="GO:0080043">
    <property type="term" value="F:quercetin 3-O-glucosyltransferase activity"/>
    <property type="evidence" value="ECO:0007669"/>
    <property type="project" value="TreeGrafter"/>
</dbReference>
<dbReference type="GO" id="GO:0080044">
    <property type="term" value="F:quercetin 7-O-glucosyltransferase activity"/>
    <property type="evidence" value="ECO:0007669"/>
    <property type="project" value="TreeGrafter"/>
</dbReference>
<dbReference type="CDD" id="cd03784">
    <property type="entry name" value="GT1_Gtf-like"/>
    <property type="match status" value="1"/>
</dbReference>
<dbReference type="FunFam" id="3.40.50.2000:FF:000040">
    <property type="entry name" value="UDP-glycosyltransferase 76C1"/>
    <property type="match status" value="1"/>
</dbReference>
<dbReference type="Gene3D" id="3.40.50.2000">
    <property type="entry name" value="Glycogen Phosphorylase B"/>
    <property type="match status" value="2"/>
</dbReference>
<dbReference type="InterPro" id="IPR002213">
    <property type="entry name" value="UDP_glucos_trans"/>
</dbReference>
<dbReference type="PANTHER" id="PTHR11926">
    <property type="entry name" value="GLUCOSYL/GLUCURONOSYL TRANSFERASES"/>
    <property type="match status" value="1"/>
</dbReference>
<dbReference type="PANTHER" id="PTHR11926:SF1374">
    <property type="entry name" value="UDP-GLYCOSYLTRANSFERASE 76F1-RELATED"/>
    <property type="match status" value="1"/>
</dbReference>
<dbReference type="Pfam" id="PF00201">
    <property type="entry name" value="UDPGT"/>
    <property type="match status" value="1"/>
</dbReference>
<dbReference type="SUPFAM" id="SSF53756">
    <property type="entry name" value="UDP-Glycosyltransferase/glycogen phosphorylase"/>
    <property type="match status" value="1"/>
</dbReference>
<evidence type="ECO:0000250" key="1">
    <source>
        <dbReference type="UniProtKB" id="Q6VAA6"/>
    </source>
</evidence>
<evidence type="ECO:0000250" key="2">
    <source>
        <dbReference type="UniProtKB" id="Q9M156"/>
    </source>
</evidence>
<evidence type="ECO:0000303" key="3">
    <source>
    </source>
</evidence>
<evidence type="ECO:0000305" key="4"/>
<accession>Q6VAB1</accession>